<dbReference type="EC" id="2.6.1.-" evidence="1"/>
<dbReference type="EMBL" id="AB525198">
    <property type="protein sequence ID" value="BAI44740.1"/>
    <property type="molecule type" value="Genomic_DNA"/>
</dbReference>
<dbReference type="EMBL" id="AB525200">
    <property type="protein sequence ID" value="BAI44804.1"/>
    <property type="molecule type" value="Genomic_DNA"/>
</dbReference>
<dbReference type="SMR" id="C9K7B6"/>
<dbReference type="VEuPathDB" id="FungiDB:CC77DRAFT_1020056"/>
<dbReference type="GO" id="GO:0004084">
    <property type="term" value="F:branched-chain-amino-acid transaminase activity"/>
    <property type="evidence" value="ECO:0007669"/>
    <property type="project" value="InterPro"/>
</dbReference>
<dbReference type="GO" id="GO:0009081">
    <property type="term" value="P:branched-chain amino acid metabolic process"/>
    <property type="evidence" value="ECO:0007669"/>
    <property type="project" value="InterPro"/>
</dbReference>
<dbReference type="Gene3D" id="3.30.470.10">
    <property type="match status" value="1"/>
</dbReference>
<dbReference type="Gene3D" id="3.20.10.10">
    <property type="entry name" value="D-amino Acid Aminotransferase, subunit A, domain 2"/>
    <property type="match status" value="1"/>
</dbReference>
<dbReference type="InterPro" id="IPR001544">
    <property type="entry name" value="Aminotrans_IV"/>
</dbReference>
<dbReference type="InterPro" id="IPR036038">
    <property type="entry name" value="Aminotransferase-like"/>
</dbReference>
<dbReference type="InterPro" id="IPR005786">
    <property type="entry name" value="B_amino_transII"/>
</dbReference>
<dbReference type="InterPro" id="IPR043132">
    <property type="entry name" value="BCAT-like_C"/>
</dbReference>
<dbReference type="InterPro" id="IPR043131">
    <property type="entry name" value="BCAT-like_N"/>
</dbReference>
<dbReference type="PANTHER" id="PTHR42825">
    <property type="entry name" value="AMINO ACID AMINOTRANSFERASE"/>
    <property type="match status" value="1"/>
</dbReference>
<dbReference type="PANTHER" id="PTHR42825:SF2">
    <property type="entry name" value="BRANCHED-CHAIN-AMINO-ACID AMINOTRANSFERASE 3, CHLOROPLASTIC-RELATED"/>
    <property type="match status" value="1"/>
</dbReference>
<dbReference type="Pfam" id="PF01063">
    <property type="entry name" value="Aminotran_4"/>
    <property type="match status" value="1"/>
</dbReference>
<dbReference type="PIRSF" id="PIRSF006468">
    <property type="entry name" value="BCAT1"/>
    <property type="match status" value="1"/>
</dbReference>
<dbReference type="SUPFAM" id="SSF56752">
    <property type="entry name" value="D-aminoacid aminotransferase-like PLP-dependent enzymes"/>
    <property type="match status" value="1"/>
</dbReference>
<name>AMT5_ALTAL</name>
<gene>
    <name evidence="6" type="primary">AMT5</name>
</gene>
<evidence type="ECO:0000250" key="1">
    <source>
        <dbReference type="UniProtKB" id="K0E3V3"/>
    </source>
</evidence>
<evidence type="ECO:0000250" key="2">
    <source>
        <dbReference type="UniProtKB" id="P19938"/>
    </source>
</evidence>
<evidence type="ECO:0000269" key="3">
    <source>
    </source>
</evidence>
<evidence type="ECO:0000269" key="4">
    <source>
    </source>
</evidence>
<evidence type="ECO:0000269" key="5">
    <source>
    </source>
</evidence>
<evidence type="ECO:0000303" key="6">
    <source>
    </source>
</evidence>
<evidence type="ECO:0000303" key="7">
    <source>
    </source>
</evidence>
<evidence type="ECO:0000305" key="8"/>
<evidence type="ECO:0000305" key="9">
    <source>
    </source>
</evidence>
<evidence type="ECO:0000305" key="10">
    <source>
    </source>
</evidence>
<proteinExistence type="evidence at transcript level"/>
<keyword id="KW-0032">Aminotransferase</keyword>
<keyword id="KW-0663">Pyridoxal phosphate</keyword>
<keyword id="KW-0808">Transferase</keyword>
<keyword id="KW-0843">Virulence</keyword>
<organism>
    <name type="scientific">Alternaria alternata</name>
    <name type="common">Alternaria rot fungus</name>
    <name type="synonym">Torula alternata</name>
    <dbReference type="NCBI Taxonomy" id="5599"/>
    <lineage>
        <taxon>Eukaryota</taxon>
        <taxon>Fungi</taxon>
        <taxon>Dikarya</taxon>
        <taxon>Ascomycota</taxon>
        <taxon>Pezizomycotina</taxon>
        <taxon>Dothideomycetes</taxon>
        <taxon>Pleosporomycetidae</taxon>
        <taxon>Pleosporales</taxon>
        <taxon>Pleosporineae</taxon>
        <taxon>Pleosporaceae</taxon>
        <taxon>Alternaria</taxon>
        <taxon>Alternaria sect. Alternaria</taxon>
        <taxon>Alternaria alternata complex</taxon>
    </lineage>
</organism>
<comment type="function">
    <text evidence="3 4 5 7 9 10">Transaminase; part of the gene clusters that mediate the biosynthesis of AM-toxins, host-selective toxins (HSTs) causing Alternaria blotch on apple, a worldwide distributed disease (Probable). AM-toxins are cyclic depsipeptides containing the 3 residues 2-hydroxy-isovaleric acid (2-HIV), dehydroalanine, L-alanine which are common for all 3 AM-toxins I to III. The fourth precursor is L-alpha-amino-methoxyphenyl-valeric acid (L-Amv) for AM-toxin I, L-alpha-amino-phenyl-valeric acid (L-Apv) for AM-toxin II, and L-alpha-amino-hydroxyphenyl-valeric acid (L-Ahv) for AM-toxin III (Probable). AM-toxins have two target sites for affecting susceptible apple cells; they cause invagination of the plasma membrane and electrolyte loss and chloroplast disorganization (PubMed:22846083). The non-ribosomal peptide synthetase AMT1 contains 4 catalytic modules and is responsible for activation of each residue in AM-toxin (PubMed:10875335). The aldo-keto reductase AMT2 catalyzes the conversion of 2-keto-isovaleric acid (2-KIV) to 2-hydroxy-isovaleric acid (2-HIV), one of the precursor residues incorporated by AMT1 during AM-toxin biosynthesis, by reduction of its ketone to an alcohol (PubMed:15066029). The cytochrome P450 monooxygenase AMT3 and the thioesterase AMT4 are also important for AM-toxin production, but their exact function within the AM-toxin biosynthesis are not known yet (PubMed:17990954). Up to 21 proteins (including AMT1 to AMT4) are predicted to be involved in AM-toxin biosynthesis since their expression is highly up-regulated in AM-toxin-producing cultures (PubMed:17990954).</text>
</comment>
<comment type="cofactor">
    <cofactor evidence="2">
        <name>pyridoxal 5'-phosphate</name>
        <dbReference type="ChEBI" id="CHEBI:597326"/>
    </cofactor>
</comment>
<comment type="pathway">
    <text evidence="10">Mycotoxin biosynthesis.</text>
</comment>
<comment type="induction">
    <text evidence="5">Expression is up-regulated more than 10 fold in toxin producing cultures.</text>
</comment>
<comment type="miscellaneous">
    <text evidence="5">Gene clusters encoding host-selective toxins (HSTs) are localized on conditionally dispensable chromosomes (CDCs), also called supernumerary chromosomes, where they are present in multiple copies (PubMed:17990954). The CDCs are not essential for saprophytic growth but controls host-selective pathogenicity (PubMed:17990954).</text>
</comment>
<comment type="similarity">
    <text evidence="8">Belongs to the class-IV pyridoxal-phosphate-dependent aminotransferase family.</text>
</comment>
<protein>
    <recommendedName>
        <fullName evidence="1">Transaminase AMT5</fullName>
        <ecNumber evidence="1">2.6.1.-</ecNumber>
    </recommendedName>
    <alternativeName>
        <fullName evidence="6">AM-toxin biosynthesis protein 5</fullName>
    </alternativeName>
</protein>
<accession>C9K7B6</accession>
<reference key="1">
    <citation type="journal article" date="2007" name="Mol. Plant Microbe Interact.">
        <title>Expression profiles of genes encoded by the supernumerary chromosome controlling AM-toxin biosynthesis and pathogenicity in the apple pathotype of Alternaria alternata.</title>
        <authorList>
            <person name="Harimoto Y."/>
            <person name="Hatta R."/>
            <person name="Kodama M."/>
            <person name="Yamamoto M."/>
            <person name="Otani H."/>
            <person name="Tsuge T."/>
        </authorList>
    </citation>
    <scope>NUCLEOTIDE SEQUENCE [GENOMIC DNA]</scope>
    <scope>INDUCTION</scope>
    <scope>PATHWAY</scope>
    <source>
        <strain>NBRC 8984</strain>
    </source>
</reference>
<reference key="2">
    <citation type="journal article" date="2000" name="Mol. Plant Microbe Interact.">
        <title>Cloning and characterization of a cyclic peptide synthetase gene from Alternaria alternata apple pathotype whose product is involved in AM-toxin synthesis and pathogenicity.</title>
        <authorList>
            <person name="Johnson R.D."/>
            <person name="Johnson L."/>
            <person name="Itoh Y."/>
            <person name="Kodama M."/>
            <person name="Otani H."/>
            <person name="Kohmoto K."/>
        </authorList>
    </citation>
    <scope>FUNCTION</scope>
    <source>
        <strain>M-71</strain>
    </source>
</reference>
<reference key="3">
    <citation type="journal article" date="2004" name="Mol. Microbiol.">
        <title>Dissection of the host range of the fungal plant pathogen Alternaria alternata by modification of secondary metabolism.</title>
        <authorList>
            <person name="Ito K."/>
            <person name="Tanaka T."/>
            <person name="Hatta R."/>
            <person name="Yamamoto M."/>
            <person name="Akimitsu K."/>
            <person name="Tsuge T."/>
        </authorList>
    </citation>
    <scope>FUNCTION</scope>
    <source>
        <strain>NBRC 8984</strain>
    </source>
</reference>
<reference key="4">
    <citation type="journal article" date="2013" name="FEMS Microbiol. Rev.">
        <title>Host-selective toxins produced by the plant pathogenic fungus Alternaria alternata.</title>
        <authorList>
            <person name="Tsuge T."/>
            <person name="Harimoto Y."/>
            <person name="Akimitsu K."/>
            <person name="Ohtani K."/>
            <person name="Kodama M."/>
            <person name="Akagi Y."/>
            <person name="Egusa M."/>
            <person name="Yamamoto M."/>
            <person name="Otani H."/>
        </authorList>
    </citation>
    <scope>REVIEW ON HOST-SELECTIVE TOXINS</scope>
</reference>
<feature type="chain" id="PRO_0000444822" description="Transaminase AMT5">
    <location>
        <begin position="1"/>
        <end position="373"/>
    </location>
</feature>
<feature type="binding site" evidence="2">
    <location>
        <position position="92"/>
    </location>
    <ligand>
        <name>pyridoxal 5'-phosphate</name>
        <dbReference type="ChEBI" id="CHEBI:597326"/>
    </ligand>
</feature>
<feature type="binding site" evidence="2">
    <location>
        <position position="232"/>
    </location>
    <ligand>
        <name>pyridoxal 5'-phosphate</name>
        <dbReference type="ChEBI" id="CHEBI:597326"/>
    </ligand>
</feature>
<feature type="modified residue" description="N6-(pyridoxal phosphate)lysine" evidence="2">
    <location>
        <position position="196"/>
    </location>
</feature>
<sequence length="373" mass="40482">MASYGFPLTASSLVDWTSLTFSPIEVNGHIQCTYSPEVAEWGAPHFVKDPYLRVHGLAPALNYGQQIFEGMKAFRTPTGSIRLFRPKMNAVRFAHSASFVAIPPVPEALFLRAVHLAVGLNSEFVPPYDSRGSALYIRPIAFASSATVNLAPADHFTFCVFVMPVAPLSTGAGQGLRALVVEDVDRAAPKGTGSAKVGGNYAPIVTTMQRAKADGYGLTLHLDSATHTMVDEFSASGFIGVRVDAGKTTMVVPDSPTILRSITVDSMCRIAESFGWQVQRRAVSFTELAELSEAFAVGTAFILTPVRAITRPCTHTCIEYTADYRSSASAYTRLLETLQGIQQGWLDDAWGWTEEVQDPSSDEFITDTVQARR</sequence>